<protein>
    <recommendedName>
        <fullName evidence="4">Subtelomeric hrmA-associated cluster protein AFUB_078970</fullName>
    </recommendedName>
    <alternativeName>
        <fullName evidence="4">Myb-like domain-containing protein AFUB_078970</fullName>
    </alternativeName>
</protein>
<gene>
    <name type="ORF">AFUB_078970</name>
</gene>
<sequence>MHTLHLIFEPRPKAPRLHALIVADAFQLPANPSRLLQTTKLECLAASMQRILSHYQPRVRTNHSVLSSRAVAQHLGSDNADPPRPETILYAQNHDPFGRKSSFLPRCADNGLCHADANPVSEVPESPPSTVKSSGDASVSDKDDDGLMDRCMLHDGAKGLLAVPRSKVQTSSGQVAETSPPQLSRKVIQNATSSSLYIKVERSKPSSRKRPSCIALETDEKASGPRIRARLGAKVQPSLGQVVEKFKRQATQHDTGSSMCIKPESARSKPIRRKRPAGAALETDEKASGPQTRARARAEASEASEASSPLPIARSARPYSAAEDDILQTLVARGLAWEEIEKEFGLRFAKRTMRSLQMRWSRKLKLTAPSTRCSKRKRSSASL</sequence>
<dbReference type="EMBL" id="DS499599">
    <property type="protein sequence ID" value="EDP49864.1"/>
    <property type="molecule type" value="Genomic_DNA"/>
</dbReference>
<dbReference type="SMR" id="B0Y8Y3"/>
<dbReference type="EnsemblFungi" id="EDP49864">
    <property type="protein sequence ID" value="EDP49864"/>
    <property type="gene ID" value="AFUB_078970"/>
</dbReference>
<dbReference type="HOGENOM" id="CLU_721546_0_0_1"/>
<dbReference type="OrthoDB" id="128832at5052"/>
<dbReference type="Proteomes" id="UP000001699">
    <property type="component" value="Unassembled WGS sequence"/>
</dbReference>
<dbReference type="GO" id="GO:0007155">
    <property type="term" value="P:cell adhesion"/>
    <property type="evidence" value="ECO:0007669"/>
    <property type="project" value="UniProtKB-KW"/>
</dbReference>
<dbReference type="InterPro" id="IPR001005">
    <property type="entry name" value="SANT/Myb"/>
</dbReference>
<dbReference type="Pfam" id="PF13921">
    <property type="entry name" value="Myb_DNA-bind_6"/>
    <property type="match status" value="1"/>
</dbReference>
<dbReference type="PROSITE" id="PS50090">
    <property type="entry name" value="MYB_LIKE"/>
    <property type="match status" value="1"/>
</dbReference>
<comment type="function">
    <text evidence="3">Myb-like domain-containing protein; part of the subtelomeric hrmA-associated cluster (HAC) containing genes that alter the hyphal surface (such as reduced total chitin or increased beta-glucan exposure) and perturb inter-hyphal interactions within the developing biofilms, resulting in a loss of vertically aligned polarized growing filaments (PubMed:31548684). Consequently, this hypoxia-typic morphotype (called H-MORPH) with altered biofilm architecture leads to increased hypoxia fitness, increased host inflammation, rapid disease progression, and mortality in a murine model of invasive aspergillosis (PubMed:31548684).</text>
</comment>
<comment type="induction">
    <text evidence="3">Expression is regulated by the hypoxia responsive morphology factor A (hrmA).</text>
</comment>
<reference key="1">
    <citation type="journal article" date="2008" name="PLoS Genet.">
        <title>Genomic islands in the pathogenic filamentous fungus Aspergillus fumigatus.</title>
        <authorList>
            <person name="Fedorova N.D."/>
            <person name="Khaldi N."/>
            <person name="Joardar V.S."/>
            <person name="Maiti R."/>
            <person name="Amedeo P."/>
            <person name="Anderson M.J."/>
            <person name="Crabtree J."/>
            <person name="Silva J.C."/>
            <person name="Badger J.H."/>
            <person name="Albarraq A."/>
            <person name="Angiuoli S."/>
            <person name="Bussey H."/>
            <person name="Bowyer P."/>
            <person name="Cotty P.J."/>
            <person name="Dyer P.S."/>
            <person name="Egan A."/>
            <person name="Galens K."/>
            <person name="Fraser-Liggett C.M."/>
            <person name="Haas B.J."/>
            <person name="Inman J.M."/>
            <person name="Kent R."/>
            <person name="Lemieux S."/>
            <person name="Malavazi I."/>
            <person name="Orvis J."/>
            <person name="Roemer T."/>
            <person name="Ronning C.M."/>
            <person name="Sundaram J.P."/>
            <person name="Sutton G."/>
            <person name="Turner G."/>
            <person name="Venter J.C."/>
            <person name="White O.R."/>
            <person name="Whitty B.R."/>
            <person name="Youngman P."/>
            <person name="Wolfe K.H."/>
            <person name="Goldman G.H."/>
            <person name="Wortman J.R."/>
            <person name="Jiang B."/>
            <person name="Denning D.W."/>
            <person name="Nierman W.C."/>
        </authorList>
    </citation>
    <scope>NUCLEOTIDE SEQUENCE [LARGE SCALE GENOMIC DNA]</scope>
    <source>
        <strain>CBS 144.89 / FGSC A1163 / CEA10</strain>
    </source>
</reference>
<reference key="2">
    <citation type="journal article" date="2019" name="Nat. Microbiol.">
        <title>Fungal biofilm morphology impacts hypoxia fitness and disease progression.</title>
        <authorList>
            <person name="Kowalski C.H."/>
            <person name="Kerkaert J.D."/>
            <person name="Liu K.W."/>
            <person name="Bond M.C."/>
            <person name="Hartmann R."/>
            <person name="Nadell C.D."/>
            <person name="Stajich J.E."/>
            <person name="Cramer R.A."/>
        </authorList>
    </citation>
    <scope>FUNCTION</scope>
    <scope>INDUCTION</scope>
</reference>
<proteinExistence type="evidence at transcript level"/>
<organism>
    <name type="scientific">Aspergillus fumigatus (strain CBS 144.89 / FGSC A1163 / CEA10)</name>
    <name type="common">Neosartorya fumigata</name>
    <dbReference type="NCBI Taxonomy" id="451804"/>
    <lineage>
        <taxon>Eukaryota</taxon>
        <taxon>Fungi</taxon>
        <taxon>Dikarya</taxon>
        <taxon>Ascomycota</taxon>
        <taxon>Pezizomycotina</taxon>
        <taxon>Eurotiomycetes</taxon>
        <taxon>Eurotiomycetidae</taxon>
        <taxon>Eurotiales</taxon>
        <taxon>Aspergillaceae</taxon>
        <taxon>Aspergillus</taxon>
        <taxon>Aspergillus subgen. Fumigati</taxon>
    </lineage>
</organism>
<name>HAC1_ASPFC</name>
<keyword id="KW-0130">Cell adhesion</keyword>
<keyword id="KW-0843">Virulence</keyword>
<evidence type="ECO:0000255" key="1">
    <source>
        <dbReference type="PROSITE-ProRule" id="PRU00133"/>
    </source>
</evidence>
<evidence type="ECO:0000256" key="2">
    <source>
        <dbReference type="SAM" id="MobiDB-lite"/>
    </source>
</evidence>
<evidence type="ECO:0000269" key="3">
    <source>
    </source>
</evidence>
<evidence type="ECO:0000303" key="4">
    <source>
    </source>
</evidence>
<feature type="chain" id="PRO_0000460418" description="Subtelomeric hrmA-associated cluster protein AFUB_078970">
    <location>
        <begin position="1"/>
        <end position="383"/>
    </location>
</feature>
<feature type="domain" description="Myb-like" evidence="1">
    <location>
        <begin position="318"/>
        <end position="364"/>
    </location>
</feature>
<feature type="region of interest" description="Disordered" evidence="2">
    <location>
        <begin position="118"/>
        <end position="145"/>
    </location>
</feature>
<feature type="region of interest" description="Disordered" evidence="2">
    <location>
        <begin position="249"/>
        <end position="318"/>
    </location>
</feature>
<feature type="compositionally biased region" description="Low complexity" evidence="2">
    <location>
        <begin position="119"/>
        <end position="134"/>
    </location>
</feature>
<accession>B0Y8Y3</accession>